<dbReference type="EC" id="4.2.1.182" evidence="1"/>
<dbReference type="EMBL" id="AE009950">
    <property type="protein sequence ID" value="AAL80515.1"/>
    <property type="molecule type" value="Genomic_DNA"/>
</dbReference>
<dbReference type="RefSeq" id="WP_011011504.1">
    <property type="nucleotide sequence ID" value="NZ_CP023154.1"/>
</dbReference>
<dbReference type="SMR" id="Q8U3R5"/>
<dbReference type="STRING" id="186497.PF0391"/>
<dbReference type="PaxDb" id="186497-PF0391"/>
<dbReference type="KEGG" id="pfu:PF0391"/>
<dbReference type="PATRIC" id="fig|186497.12.peg.406"/>
<dbReference type="eggNOG" id="arCOG04279">
    <property type="taxonomic scope" value="Archaea"/>
</dbReference>
<dbReference type="HOGENOM" id="CLU_141583_2_0_2"/>
<dbReference type="OrthoDB" id="18062at2157"/>
<dbReference type="PhylomeDB" id="Q8U3R5"/>
<dbReference type="UniPathway" id="UPA00057"/>
<dbReference type="Proteomes" id="UP000001013">
    <property type="component" value="Chromosome"/>
</dbReference>
<dbReference type="GO" id="GO:0016836">
    <property type="term" value="F:hydro-lyase activity"/>
    <property type="evidence" value="ECO:0007669"/>
    <property type="project" value="UniProtKB-UniRule"/>
</dbReference>
<dbReference type="GO" id="GO:0019287">
    <property type="term" value="P:isopentenyl diphosphate biosynthetic process, mevalonate pathway"/>
    <property type="evidence" value="ECO:0007669"/>
    <property type="project" value="UniProtKB-UniRule"/>
</dbReference>
<dbReference type="CDD" id="cd01356">
    <property type="entry name" value="AcnX_swivel"/>
    <property type="match status" value="1"/>
</dbReference>
<dbReference type="Gene3D" id="3.50.30.10">
    <property type="entry name" value="Phosphohistidine domain"/>
    <property type="match status" value="1"/>
</dbReference>
<dbReference type="HAMAP" id="MF_00078">
    <property type="entry name" value="PMDh_S"/>
    <property type="match status" value="1"/>
</dbReference>
<dbReference type="InterPro" id="IPR012016">
    <property type="entry name" value="PMDh-S-like"/>
</dbReference>
<dbReference type="InterPro" id="IPR002840">
    <property type="entry name" value="PMDh-S-like_dom"/>
</dbReference>
<dbReference type="InterPro" id="IPR020794">
    <property type="entry name" value="PMDh_S"/>
</dbReference>
<dbReference type="NCBIfam" id="NF003046">
    <property type="entry name" value="PRK03955.1"/>
    <property type="match status" value="1"/>
</dbReference>
<dbReference type="PANTHER" id="PTHR36577">
    <property type="entry name" value="DUF521 DOMAIN PROTEIN (AFU_ORTHOLOGUE AFUA_6G00490)"/>
    <property type="match status" value="1"/>
</dbReference>
<dbReference type="PANTHER" id="PTHR36577:SF3">
    <property type="entry name" value="DUF521 DOMAIN PROTEIN (AFU_ORTHOLOGUE AFUA_6G00490)"/>
    <property type="match status" value="1"/>
</dbReference>
<dbReference type="Pfam" id="PF01989">
    <property type="entry name" value="AcnX_swivel_put"/>
    <property type="match status" value="1"/>
</dbReference>
<dbReference type="PIRSF" id="PIRSF004966">
    <property type="entry name" value="UCP004966"/>
    <property type="match status" value="1"/>
</dbReference>
<dbReference type="SUPFAM" id="SSF52016">
    <property type="entry name" value="LeuD/IlvD-like"/>
    <property type="match status" value="1"/>
</dbReference>
<organism>
    <name type="scientific">Pyrococcus furiosus (strain ATCC 43587 / DSM 3638 / JCM 8422 / Vc1)</name>
    <dbReference type="NCBI Taxonomy" id="186497"/>
    <lineage>
        <taxon>Archaea</taxon>
        <taxon>Methanobacteriati</taxon>
        <taxon>Methanobacteriota</taxon>
        <taxon>Thermococci</taxon>
        <taxon>Thermococcales</taxon>
        <taxon>Thermococcaceae</taxon>
        <taxon>Pyrococcus</taxon>
    </lineage>
</organism>
<comment type="function">
    <text evidence="1">Component of a hydro-lyase that catalyzes the dehydration of mevalonate 5-phosphate (MVA5P) to form trans-anhydromevalonate 5-phosphate (tAHMP). Involved in the archaeal mevalonate (MVA) pathway, which provides fundamental precursors for isoprenoid biosynthesis, such as isopentenyl diphosphate (IPP) and dimethylallyl diphosphate (DMAPP).</text>
</comment>
<comment type="catalytic activity">
    <reaction evidence="1">
        <text>(R)-5-phosphomevalonate = (2E)-3-methyl-5-phosphooxypent-2-enoate + H2O</text>
        <dbReference type="Rhea" id="RHEA:78975"/>
        <dbReference type="ChEBI" id="CHEBI:15377"/>
        <dbReference type="ChEBI" id="CHEBI:58146"/>
        <dbReference type="ChEBI" id="CHEBI:229665"/>
        <dbReference type="EC" id="4.2.1.182"/>
    </reaction>
    <physiologicalReaction direction="left-to-right" evidence="1">
        <dbReference type="Rhea" id="RHEA:78976"/>
    </physiologicalReaction>
</comment>
<comment type="pathway">
    <text evidence="1">Isoprenoid biosynthesis; isopentenyl diphosphate biosynthesis via mevalonate pathway.</text>
</comment>
<comment type="subunit">
    <text evidence="1">Heterodimer composed of a large subunit (PMDh-L) and a small subunit (PMDh-S).</text>
</comment>
<comment type="similarity">
    <text evidence="1">Belongs to the AcnX type II small subunit family.</text>
</comment>
<accession>Q8U3R5</accession>
<evidence type="ECO:0000255" key="1">
    <source>
        <dbReference type="HAMAP-Rule" id="MF_00078"/>
    </source>
</evidence>
<gene>
    <name type="ordered locus">PF0391</name>
</gene>
<reference key="1">
    <citation type="journal article" date="1999" name="Genetics">
        <title>Divergence of the hyperthermophilic archaea Pyrococcus furiosus and P. horikoshii inferred from complete genomic sequences.</title>
        <authorList>
            <person name="Maeder D.L."/>
            <person name="Weiss R.B."/>
            <person name="Dunn D.M."/>
            <person name="Cherry J.L."/>
            <person name="Gonzalez J.M."/>
            <person name="DiRuggiero J."/>
            <person name="Robb F.T."/>
        </authorList>
    </citation>
    <scope>NUCLEOTIDE SEQUENCE [LARGE SCALE GENOMIC DNA]</scope>
    <source>
        <strain>ATCC 43587 / DSM 3638 / JCM 8422 / Vc1</strain>
    </source>
</reference>
<feature type="chain" id="PRO_0000152570" description="Phosphomevalonate dehydratase small subunit">
    <location>
        <begin position="1"/>
        <end position="134"/>
    </location>
</feature>
<feature type="active site" description="Proton acceptor" evidence="1">
    <location>
        <position position="62"/>
    </location>
</feature>
<sequence>MKLKGRGIVKGVAEGELVVSRKPLSFLGGVDPNTGIITDPESDIQGEKITGKILAFPRGKGSTVGSYVIYALAKKGTGPKAIIVEEAEAIVAVGAIIAGIPLVTGIDISKLKSGMKVRVDGERGEVEIIAQGDL</sequence>
<name>PMDHS_PYRFU</name>
<keyword id="KW-0414">Isoprene biosynthesis</keyword>
<keyword id="KW-0456">Lyase</keyword>
<keyword id="KW-1185">Reference proteome</keyword>
<proteinExistence type="inferred from homology"/>
<protein>
    <recommendedName>
        <fullName evidence="1">Phosphomevalonate dehydratase small subunit</fullName>
        <shortName evidence="1">PMDh small subunit</shortName>
        <shortName evidence="1">PMDh-S</shortName>
        <ecNumber evidence="1">4.2.1.182</ecNumber>
    </recommendedName>
</protein>